<gene>
    <name evidence="1" type="primary">ttcA</name>
    <name type="ordered locus">Pnap_0516</name>
</gene>
<sequence>MNAIWIDEQLETSARVQNSMKIEREDHKLEKRLCREVGRAIVDFNMIEEGDKVMVCVSGGKDSYAMLDILLKLQKRAPINFELVAVNLDQKQPGFPEHVLPEYLSKLGVPYHIENQDTYSIVTRVIPEGKTLCSLCSRLRRGILYRVAGELGCTKIALGHHRDDMLQTFFLNMFFAAKLKGMPPKLVSDDGKNIVIRPMAYVTEKDLTRWAQVQDFPIIPCTLCGSQENLQRKQVGNMLRDWQKQYPGRIENMFSALQNIVPSHLMDSKRHDFKGIRTTGVADPEGDKAFDAEEFMQAAPAGRAVIGINPLAPG</sequence>
<accession>A1VJK9</accession>
<dbReference type="EC" id="2.8.1.-" evidence="1"/>
<dbReference type="EMBL" id="CP000529">
    <property type="protein sequence ID" value="ABM35837.1"/>
    <property type="molecule type" value="Genomic_DNA"/>
</dbReference>
<dbReference type="RefSeq" id="WP_011799937.1">
    <property type="nucleotide sequence ID" value="NC_008781.1"/>
</dbReference>
<dbReference type="SMR" id="A1VJK9"/>
<dbReference type="STRING" id="365044.Pnap_0516"/>
<dbReference type="KEGG" id="pna:Pnap_0516"/>
<dbReference type="eggNOG" id="COG0037">
    <property type="taxonomic scope" value="Bacteria"/>
</dbReference>
<dbReference type="HOGENOM" id="CLU_026481_0_0_4"/>
<dbReference type="OrthoDB" id="9801054at2"/>
<dbReference type="Proteomes" id="UP000000644">
    <property type="component" value="Chromosome"/>
</dbReference>
<dbReference type="GO" id="GO:0005737">
    <property type="term" value="C:cytoplasm"/>
    <property type="evidence" value="ECO:0007669"/>
    <property type="project" value="UniProtKB-SubCell"/>
</dbReference>
<dbReference type="GO" id="GO:0051539">
    <property type="term" value="F:4 iron, 4 sulfur cluster binding"/>
    <property type="evidence" value="ECO:0007669"/>
    <property type="project" value="UniProtKB-UniRule"/>
</dbReference>
<dbReference type="GO" id="GO:0005524">
    <property type="term" value="F:ATP binding"/>
    <property type="evidence" value="ECO:0007669"/>
    <property type="project" value="UniProtKB-UniRule"/>
</dbReference>
<dbReference type="GO" id="GO:0000287">
    <property type="term" value="F:magnesium ion binding"/>
    <property type="evidence" value="ECO:0007669"/>
    <property type="project" value="UniProtKB-UniRule"/>
</dbReference>
<dbReference type="GO" id="GO:0016783">
    <property type="term" value="F:sulfurtransferase activity"/>
    <property type="evidence" value="ECO:0007669"/>
    <property type="project" value="UniProtKB-UniRule"/>
</dbReference>
<dbReference type="GO" id="GO:0000049">
    <property type="term" value="F:tRNA binding"/>
    <property type="evidence" value="ECO:0007669"/>
    <property type="project" value="UniProtKB-KW"/>
</dbReference>
<dbReference type="GO" id="GO:0034227">
    <property type="term" value="P:tRNA thio-modification"/>
    <property type="evidence" value="ECO:0007669"/>
    <property type="project" value="UniProtKB-UniRule"/>
</dbReference>
<dbReference type="CDD" id="cd24138">
    <property type="entry name" value="TtcA-like"/>
    <property type="match status" value="1"/>
</dbReference>
<dbReference type="Gene3D" id="3.40.50.620">
    <property type="entry name" value="HUPs"/>
    <property type="match status" value="1"/>
</dbReference>
<dbReference type="HAMAP" id="MF_01850">
    <property type="entry name" value="TtcA"/>
    <property type="match status" value="1"/>
</dbReference>
<dbReference type="InterPro" id="IPR014729">
    <property type="entry name" value="Rossmann-like_a/b/a_fold"/>
</dbReference>
<dbReference type="InterPro" id="IPR011063">
    <property type="entry name" value="TilS/TtcA_N"/>
</dbReference>
<dbReference type="InterPro" id="IPR012089">
    <property type="entry name" value="tRNA_Cyd_32_2_STrfase"/>
</dbReference>
<dbReference type="InterPro" id="IPR035107">
    <property type="entry name" value="tRNA_thiolation_TtcA_Ctu1"/>
</dbReference>
<dbReference type="NCBIfam" id="NF007972">
    <property type="entry name" value="PRK10696.1"/>
    <property type="match status" value="1"/>
</dbReference>
<dbReference type="PANTHER" id="PTHR43686:SF1">
    <property type="entry name" value="AMINOTRAN_5 DOMAIN-CONTAINING PROTEIN"/>
    <property type="match status" value="1"/>
</dbReference>
<dbReference type="PANTHER" id="PTHR43686">
    <property type="entry name" value="SULFURTRANSFERASE-RELATED"/>
    <property type="match status" value="1"/>
</dbReference>
<dbReference type="Pfam" id="PF01171">
    <property type="entry name" value="ATP_bind_3"/>
    <property type="match status" value="1"/>
</dbReference>
<dbReference type="PIRSF" id="PIRSF004976">
    <property type="entry name" value="ATPase_YdaO"/>
    <property type="match status" value="1"/>
</dbReference>
<dbReference type="SUPFAM" id="SSF52402">
    <property type="entry name" value="Adenine nucleotide alpha hydrolases-like"/>
    <property type="match status" value="1"/>
</dbReference>
<comment type="function">
    <text evidence="1">Catalyzes the ATP-dependent 2-thiolation of cytidine in position 32 of tRNA, to form 2-thiocytidine (s(2)C32). The sulfur atoms are provided by the cysteine/cysteine desulfurase (IscS) system.</text>
</comment>
<comment type="catalytic activity">
    <reaction evidence="1">
        <text>cytidine(32) in tRNA + S-sulfanyl-L-cysteinyl-[cysteine desulfurase] + AH2 + ATP = 2-thiocytidine(32) in tRNA + L-cysteinyl-[cysteine desulfurase] + A + AMP + diphosphate + H(+)</text>
        <dbReference type="Rhea" id="RHEA:57048"/>
        <dbReference type="Rhea" id="RHEA-COMP:10288"/>
        <dbReference type="Rhea" id="RHEA-COMP:12157"/>
        <dbReference type="Rhea" id="RHEA-COMP:12158"/>
        <dbReference type="Rhea" id="RHEA-COMP:14821"/>
        <dbReference type="ChEBI" id="CHEBI:13193"/>
        <dbReference type="ChEBI" id="CHEBI:15378"/>
        <dbReference type="ChEBI" id="CHEBI:17499"/>
        <dbReference type="ChEBI" id="CHEBI:29950"/>
        <dbReference type="ChEBI" id="CHEBI:30616"/>
        <dbReference type="ChEBI" id="CHEBI:33019"/>
        <dbReference type="ChEBI" id="CHEBI:61963"/>
        <dbReference type="ChEBI" id="CHEBI:82748"/>
        <dbReference type="ChEBI" id="CHEBI:141453"/>
        <dbReference type="ChEBI" id="CHEBI:456215"/>
    </reaction>
    <physiologicalReaction direction="left-to-right" evidence="1">
        <dbReference type="Rhea" id="RHEA:57049"/>
    </physiologicalReaction>
</comment>
<comment type="cofactor">
    <cofactor evidence="1">
        <name>Mg(2+)</name>
        <dbReference type="ChEBI" id="CHEBI:18420"/>
    </cofactor>
</comment>
<comment type="cofactor">
    <cofactor evidence="1">
        <name>[4Fe-4S] cluster</name>
        <dbReference type="ChEBI" id="CHEBI:49883"/>
    </cofactor>
    <text evidence="1">Binds 1 [4Fe-4S] cluster per subunit. The cluster is chelated by three Cys residues, the fourth Fe has a free coordination site that may bind a sulfur atom transferred from the persulfide of IscS.</text>
</comment>
<comment type="pathway">
    <text evidence="1">tRNA modification.</text>
</comment>
<comment type="subunit">
    <text evidence="1">Homodimer.</text>
</comment>
<comment type="subcellular location">
    <subcellularLocation>
        <location evidence="1">Cytoplasm</location>
    </subcellularLocation>
</comment>
<comment type="miscellaneous">
    <text evidence="1">The thiolation reaction likely consists of two steps: a first activation step by ATP to form an adenylated intermediate of the target base of tRNA, and a second nucleophilic substitution step of the sulfur (S) atom supplied by the hydrosulfide attached to the Fe-S cluster.</text>
</comment>
<comment type="similarity">
    <text evidence="1">Belongs to the TtcA family.</text>
</comment>
<evidence type="ECO:0000255" key="1">
    <source>
        <dbReference type="HAMAP-Rule" id="MF_01850"/>
    </source>
</evidence>
<name>TTCA_POLNA</name>
<keyword id="KW-0004">4Fe-4S</keyword>
<keyword id="KW-0067">ATP-binding</keyword>
<keyword id="KW-0963">Cytoplasm</keyword>
<keyword id="KW-0408">Iron</keyword>
<keyword id="KW-0411">Iron-sulfur</keyword>
<keyword id="KW-0460">Magnesium</keyword>
<keyword id="KW-0479">Metal-binding</keyword>
<keyword id="KW-0547">Nucleotide-binding</keyword>
<keyword id="KW-1185">Reference proteome</keyword>
<keyword id="KW-0694">RNA-binding</keyword>
<keyword id="KW-0808">Transferase</keyword>
<keyword id="KW-0819">tRNA processing</keyword>
<keyword id="KW-0820">tRNA-binding</keyword>
<reference key="1">
    <citation type="journal article" date="2009" name="Environ. Microbiol.">
        <title>The genome of Polaromonas naphthalenivorans strain CJ2, isolated from coal tar-contaminated sediment, reveals physiological and metabolic versatility and evolution through extensive horizontal gene transfer.</title>
        <authorList>
            <person name="Yagi J.M."/>
            <person name="Sims D."/>
            <person name="Brettin T."/>
            <person name="Bruce D."/>
            <person name="Madsen E.L."/>
        </authorList>
    </citation>
    <scope>NUCLEOTIDE SEQUENCE [LARGE SCALE GENOMIC DNA]</scope>
    <source>
        <strain>CJ2</strain>
    </source>
</reference>
<organism>
    <name type="scientific">Polaromonas naphthalenivorans (strain CJ2)</name>
    <dbReference type="NCBI Taxonomy" id="365044"/>
    <lineage>
        <taxon>Bacteria</taxon>
        <taxon>Pseudomonadati</taxon>
        <taxon>Pseudomonadota</taxon>
        <taxon>Betaproteobacteria</taxon>
        <taxon>Burkholderiales</taxon>
        <taxon>Comamonadaceae</taxon>
        <taxon>Polaromonas</taxon>
    </lineage>
</organism>
<protein>
    <recommendedName>
        <fullName evidence="1">tRNA-cytidine(32) 2-sulfurtransferase</fullName>
        <ecNumber evidence="1">2.8.1.-</ecNumber>
    </recommendedName>
    <alternativeName>
        <fullName evidence="1">Two-thiocytidine biosynthesis protein A</fullName>
    </alternativeName>
    <alternativeName>
        <fullName evidence="1">tRNA 2-thiocytidine biosynthesis protein TtcA</fullName>
    </alternativeName>
</protein>
<feature type="chain" id="PRO_0000348786" description="tRNA-cytidine(32) 2-sulfurtransferase">
    <location>
        <begin position="1"/>
        <end position="314"/>
    </location>
</feature>
<feature type="short sequence motif" description="PP-loop motif" evidence="1">
    <location>
        <begin position="58"/>
        <end position="63"/>
    </location>
</feature>
<feature type="binding site" evidence="1">
    <location>
        <position position="133"/>
    </location>
    <ligand>
        <name>[4Fe-4S] cluster</name>
        <dbReference type="ChEBI" id="CHEBI:49883"/>
    </ligand>
</feature>
<feature type="binding site" evidence="1">
    <location>
        <position position="136"/>
    </location>
    <ligand>
        <name>[4Fe-4S] cluster</name>
        <dbReference type="ChEBI" id="CHEBI:49883"/>
    </ligand>
</feature>
<feature type="binding site" evidence="1">
    <location>
        <position position="224"/>
    </location>
    <ligand>
        <name>[4Fe-4S] cluster</name>
        <dbReference type="ChEBI" id="CHEBI:49883"/>
    </ligand>
</feature>
<proteinExistence type="inferred from homology"/>